<comment type="function">
    <text evidence="5">Catalyzes the conversion of UDP-glucose into UDP-glucuronate, one of the precursors of teichuronic acid.</text>
</comment>
<comment type="catalytic activity">
    <reaction>
        <text>UDP-alpha-D-glucose + 2 NAD(+) + H2O = UDP-alpha-D-glucuronate + 2 NADH + 3 H(+)</text>
        <dbReference type="Rhea" id="RHEA:23596"/>
        <dbReference type="ChEBI" id="CHEBI:15377"/>
        <dbReference type="ChEBI" id="CHEBI:15378"/>
        <dbReference type="ChEBI" id="CHEBI:57540"/>
        <dbReference type="ChEBI" id="CHEBI:57945"/>
        <dbReference type="ChEBI" id="CHEBI:58052"/>
        <dbReference type="ChEBI" id="CHEBI:58885"/>
        <dbReference type="EC" id="1.1.1.22"/>
    </reaction>
</comment>
<comment type="activity regulation">
    <text evidence="4">Competitively inhibited by UDP-glucose. Activated by phosphorylation, which may increase affinity for NAD(+); inhibited by dephosphorylation.</text>
</comment>
<comment type="pathway">
    <text>Nucleotide-sugar biosynthesis; UDP-alpha-D-glucuronate biosynthesis; UDP-alpha-D-glucuronate from UDP-alpha-D-glucose: step 1/1.</text>
</comment>
<comment type="subcellular location">
    <subcellularLocation>
        <location evidence="1">Cytoplasm</location>
    </subcellularLocation>
</comment>
<comment type="PTM">
    <text evidence="4 5">Phosphorylated on tyrosine residue(s). Phosphorylated by YwqD and dephosphorylated by YwqE in vitro.</text>
</comment>
<comment type="similarity">
    <text evidence="6">Belongs to the UDP-glucose/GDP-mannose dehydrogenase family.</text>
</comment>
<organism>
    <name type="scientific">Bacillus subtilis (strain 168)</name>
    <dbReference type="NCBI Taxonomy" id="224308"/>
    <lineage>
        <taxon>Bacteria</taxon>
        <taxon>Bacillati</taxon>
        <taxon>Bacillota</taxon>
        <taxon>Bacilli</taxon>
        <taxon>Bacillales</taxon>
        <taxon>Bacillaceae</taxon>
        <taxon>Bacillus</taxon>
    </lineage>
</organism>
<evidence type="ECO:0000250" key="1"/>
<evidence type="ECO:0000250" key="2">
    <source>
        <dbReference type="UniProtKB" id="Q0P8H3"/>
    </source>
</evidence>
<evidence type="ECO:0000255" key="3"/>
<evidence type="ECO:0000269" key="4">
    <source>
    </source>
</evidence>
<evidence type="ECO:0000269" key="5">
    <source>
    </source>
</evidence>
<evidence type="ECO:0000305" key="6"/>
<feature type="chain" id="PRO_0000253341" description="UDP-glucose 6-dehydrogenase YwqF">
    <location>
        <begin position="1"/>
        <end position="440"/>
    </location>
</feature>
<feature type="active site" description="Nucleophile" evidence="2">
    <location>
        <position position="260"/>
    </location>
</feature>
<feature type="binding site" evidence="3">
    <location>
        <begin position="2"/>
        <end position="19"/>
    </location>
    <ligand>
        <name>NAD(+)</name>
        <dbReference type="ChEBI" id="CHEBI:57540"/>
    </ligand>
</feature>
<feature type="binding site" evidence="2">
    <location>
        <position position="11"/>
    </location>
    <ligand>
        <name>NAD(+)</name>
        <dbReference type="ChEBI" id="CHEBI:57540"/>
    </ligand>
</feature>
<feature type="binding site" evidence="2">
    <location>
        <position position="30"/>
    </location>
    <ligand>
        <name>NAD(+)</name>
        <dbReference type="ChEBI" id="CHEBI:57540"/>
    </ligand>
</feature>
<feature type="binding site" evidence="2">
    <location>
        <position position="35"/>
    </location>
    <ligand>
        <name>NAD(+)</name>
        <dbReference type="ChEBI" id="CHEBI:57540"/>
    </ligand>
</feature>
<feature type="binding site" evidence="2">
    <location>
        <position position="121"/>
    </location>
    <ligand>
        <name>NAD(+)</name>
        <dbReference type="ChEBI" id="CHEBI:57540"/>
    </ligand>
</feature>
<feature type="binding site" evidence="2">
    <location>
        <begin position="151"/>
        <end position="155"/>
    </location>
    <ligand>
        <name>substrate</name>
    </ligand>
</feature>
<feature type="binding site" evidence="2">
    <location>
        <position position="155"/>
    </location>
    <ligand>
        <name>NAD(+)</name>
        <dbReference type="ChEBI" id="CHEBI:57540"/>
    </ligand>
</feature>
<feature type="binding site" evidence="2">
    <location>
        <position position="204"/>
    </location>
    <ligand>
        <name>substrate</name>
    </ligand>
</feature>
<feature type="binding site" evidence="2">
    <location>
        <position position="208"/>
    </location>
    <ligand>
        <name>substrate</name>
    </ligand>
</feature>
<feature type="binding site" evidence="2">
    <location>
        <begin position="249"/>
        <end position="253"/>
    </location>
    <ligand>
        <name>substrate</name>
    </ligand>
</feature>
<feature type="binding site" evidence="2">
    <location>
        <position position="257"/>
    </location>
    <ligand>
        <name>substrate</name>
    </ligand>
</feature>
<feature type="binding site" evidence="2">
    <location>
        <position position="263"/>
    </location>
    <ligand>
        <name>NAD(+)</name>
        <dbReference type="ChEBI" id="CHEBI:57540"/>
    </ligand>
</feature>
<feature type="binding site" evidence="2">
    <location>
        <position position="320"/>
    </location>
    <ligand>
        <name>substrate</name>
    </ligand>
</feature>
<feature type="binding site" evidence="2">
    <location>
        <position position="327"/>
    </location>
    <ligand>
        <name>NAD(+)</name>
        <dbReference type="ChEBI" id="CHEBI:57540"/>
    </ligand>
</feature>
<feature type="mutagenesis site" description="30-fold decrease in activity but no decrease in the overall phosphorylation level." evidence="5">
    <original>Y</original>
    <variation>F</variation>
    <location>
        <position position="10"/>
    </location>
</feature>
<gene>
    <name type="primary">ywqF</name>
    <name type="ordered locus">BSU36230</name>
</gene>
<reference key="1">
    <citation type="journal article" date="1997" name="Microbiology">
        <title>The Bacillus subtilis genome from gerBC (311 degrees) to licR (334 degrees).</title>
        <authorList>
            <person name="Presecan E."/>
            <person name="Moszer I."/>
            <person name="Boursier L."/>
            <person name="Cruz Ramos H."/>
            <person name="De La Fuente V."/>
            <person name="Hullo M.-F."/>
            <person name="Lelong C."/>
            <person name="Schleich S."/>
            <person name="Sekowska A."/>
            <person name="Song B.H."/>
            <person name="Villani G."/>
            <person name="Kunst F."/>
            <person name="Danchin A."/>
            <person name="Glaser P."/>
        </authorList>
    </citation>
    <scope>NUCLEOTIDE SEQUENCE [GENOMIC DNA]</scope>
    <source>
        <strain>168</strain>
    </source>
</reference>
<reference key="2">
    <citation type="journal article" date="1997" name="Nature">
        <title>The complete genome sequence of the Gram-positive bacterium Bacillus subtilis.</title>
        <authorList>
            <person name="Kunst F."/>
            <person name="Ogasawara N."/>
            <person name="Moszer I."/>
            <person name="Albertini A.M."/>
            <person name="Alloni G."/>
            <person name="Azevedo V."/>
            <person name="Bertero M.G."/>
            <person name="Bessieres P."/>
            <person name="Bolotin A."/>
            <person name="Borchert S."/>
            <person name="Borriss R."/>
            <person name="Boursier L."/>
            <person name="Brans A."/>
            <person name="Braun M."/>
            <person name="Brignell S.C."/>
            <person name="Bron S."/>
            <person name="Brouillet S."/>
            <person name="Bruschi C.V."/>
            <person name="Caldwell B."/>
            <person name="Capuano V."/>
            <person name="Carter N.M."/>
            <person name="Choi S.-K."/>
            <person name="Codani J.-J."/>
            <person name="Connerton I.F."/>
            <person name="Cummings N.J."/>
            <person name="Daniel R.A."/>
            <person name="Denizot F."/>
            <person name="Devine K.M."/>
            <person name="Duesterhoeft A."/>
            <person name="Ehrlich S.D."/>
            <person name="Emmerson P.T."/>
            <person name="Entian K.-D."/>
            <person name="Errington J."/>
            <person name="Fabret C."/>
            <person name="Ferrari E."/>
            <person name="Foulger D."/>
            <person name="Fritz C."/>
            <person name="Fujita M."/>
            <person name="Fujita Y."/>
            <person name="Fuma S."/>
            <person name="Galizzi A."/>
            <person name="Galleron N."/>
            <person name="Ghim S.-Y."/>
            <person name="Glaser P."/>
            <person name="Goffeau A."/>
            <person name="Golightly E.J."/>
            <person name="Grandi G."/>
            <person name="Guiseppi G."/>
            <person name="Guy B.J."/>
            <person name="Haga K."/>
            <person name="Haiech J."/>
            <person name="Harwood C.R."/>
            <person name="Henaut A."/>
            <person name="Hilbert H."/>
            <person name="Holsappel S."/>
            <person name="Hosono S."/>
            <person name="Hullo M.-F."/>
            <person name="Itaya M."/>
            <person name="Jones L.-M."/>
            <person name="Joris B."/>
            <person name="Karamata D."/>
            <person name="Kasahara Y."/>
            <person name="Klaerr-Blanchard M."/>
            <person name="Klein C."/>
            <person name="Kobayashi Y."/>
            <person name="Koetter P."/>
            <person name="Koningstein G."/>
            <person name="Krogh S."/>
            <person name="Kumano M."/>
            <person name="Kurita K."/>
            <person name="Lapidus A."/>
            <person name="Lardinois S."/>
            <person name="Lauber J."/>
            <person name="Lazarevic V."/>
            <person name="Lee S.-M."/>
            <person name="Levine A."/>
            <person name="Liu H."/>
            <person name="Masuda S."/>
            <person name="Mauel C."/>
            <person name="Medigue C."/>
            <person name="Medina N."/>
            <person name="Mellado R.P."/>
            <person name="Mizuno M."/>
            <person name="Moestl D."/>
            <person name="Nakai S."/>
            <person name="Noback M."/>
            <person name="Noone D."/>
            <person name="O'Reilly M."/>
            <person name="Ogawa K."/>
            <person name="Ogiwara A."/>
            <person name="Oudega B."/>
            <person name="Park S.-H."/>
            <person name="Parro V."/>
            <person name="Pohl T.M."/>
            <person name="Portetelle D."/>
            <person name="Porwollik S."/>
            <person name="Prescott A.M."/>
            <person name="Presecan E."/>
            <person name="Pujic P."/>
            <person name="Purnelle B."/>
            <person name="Rapoport G."/>
            <person name="Rey M."/>
            <person name="Reynolds S."/>
            <person name="Rieger M."/>
            <person name="Rivolta C."/>
            <person name="Rocha E."/>
            <person name="Roche B."/>
            <person name="Rose M."/>
            <person name="Sadaie Y."/>
            <person name="Sato T."/>
            <person name="Scanlan E."/>
            <person name="Schleich S."/>
            <person name="Schroeter R."/>
            <person name="Scoffone F."/>
            <person name="Sekiguchi J."/>
            <person name="Sekowska A."/>
            <person name="Seror S.J."/>
            <person name="Serror P."/>
            <person name="Shin B.-S."/>
            <person name="Soldo B."/>
            <person name="Sorokin A."/>
            <person name="Tacconi E."/>
            <person name="Takagi T."/>
            <person name="Takahashi H."/>
            <person name="Takemaru K."/>
            <person name="Takeuchi M."/>
            <person name="Tamakoshi A."/>
            <person name="Tanaka T."/>
            <person name="Terpstra P."/>
            <person name="Tognoni A."/>
            <person name="Tosato V."/>
            <person name="Uchiyama S."/>
            <person name="Vandenbol M."/>
            <person name="Vannier F."/>
            <person name="Vassarotti A."/>
            <person name="Viari A."/>
            <person name="Wambutt R."/>
            <person name="Wedler E."/>
            <person name="Wedler H."/>
            <person name="Weitzenegger T."/>
            <person name="Winters P."/>
            <person name="Wipat A."/>
            <person name="Yamamoto H."/>
            <person name="Yamane K."/>
            <person name="Yasumoto K."/>
            <person name="Yata K."/>
            <person name="Yoshida K."/>
            <person name="Yoshikawa H.-F."/>
            <person name="Zumstein E."/>
            <person name="Yoshikawa H."/>
            <person name="Danchin A."/>
        </authorList>
    </citation>
    <scope>NUCLEOTIDE SEQUENCE [LARGE SCALE GENOMIC DNA]</scope>
    <source>
        <strain>168</strain>
    </source>
</reference>
<reference key="3">
    <citation type="journal article" date="2003" name="EMBO J.">
        <title>Transmembrane modulator-dependent bacterial tyrosine kinase activates UDP-glucose dehydrogenases.</title>
        <authorList>
            <person name="Mijakovic I."/>
            <person name="Poncet S."/>
            <person name="Boel G."/>
            <person name="Maze A."/>
            <person name="Gillet S."/>
            <person name="Jamet E."/>
            <person name="Decottignies P."/>
            <person name="Grangeasse C."/>
            <person name="Doublet P."/>
            <person name="Le Marechal P."/>
            <person name="Deutscher J."/>
        </authorList>
    </citation>
    <scope>PHOSPHORYLATION</scope>
    <scope>ACTIVITY REGULATION</scope>
</reference>
<reference key="4">
    <citation type="journal article" date="2004" name="J. Mol. Microbiol. Biotechnol.">
        <title>How tyrosine phosphorylation affects the UDP-glucose dehydrogenase activity of Bacillus subtilis YwqF.</title>
        <authorList>
            <person name="Mijakovic I."/>
            <person name="Petranovic D."/>
            <person name="Deutscher J."/>
        </authorList>
    </citation>
    <scope>FUNCTION</scope>
    <scope>MUTAGENESIS OF TYR-10</scope>
    <scope>PHOSPHORYLATION</scope>
</reference>
<sequence length="440" mass="47784">MNITVIGTGYVGLVTGVSLSEIGHHVTCIDIDAHKIDEMRKGISPIFEPGLEELMRKNTADGRLNFETSYEKGLAQADIIFIAVGTPQKSDGHANLEQITDAAKRIAKHVKRDTVVVTKSTVPVGTNDLINGLITEHLAEPVSISVASNPEFLREGSAIYDTFHGDRIVIGTADEKTANTLEELFRPFQIPIYQTDIRSAEMIKYASNAFLATKISFINEISNICEKVGADIEAVAYGMGQDKRIGSQFLKAGIGYGGSCFPKDTNALVQIAGNVEHDFELLKSVIKVNNNQQAMLVDKALNRLGGVTGKTIALLGLSFKPNTDDMREAPSIVIADRLAALDARIRAYDPIAVSHAKHVLPQAVEYKETIEEAVKGSDAVMILTDWADIKQFPLAAYQDLMETPLIFDGRNCYTLDEALAAGVEYYSVGRKAVVPSGAIQ</sequence>
<name>YWQF_BACSU</name>
<protein>
    <recommendedName>
        <fullName>UDP-glucose 6-dehydrogenase YwqF</fullName>
        <shortName>UDP-Glc dehydrogenase</shortName>
        <shortName>UDP-GlcDH</shortName>
        <shortName>UDPGDH</shortName>
        <ecNumber>1.1.1.22</ecNumber>
    </recommendedName>
</protein>
<keyword id="KW-0961">Cell wall biogenesis/degradation</keyword>
<keyword id="KW-0963">Cytoplasm</keyword>
<keyword id="KW-0520">NAD</keyword>
<keyword id="KW-0560">Oxidoreductase</keyword>
<keyword id="KW-0597">Phosphoprotein</keyword>
<keyword id="KW-1185">Reference proteome</keyword>
<dbReference type="EC" id="1.1.1.22"/>
<dbReference type="EMBL" id="Z92952">
    <property type="protein sequence ID" value="CAB07444.1"/>
    <property type="molecule type" value="Genomic_DNA"/>
</dbReference>
<dbReference type="EMBL" id="AL009126">
    <property type="protein sequence ID" value="CAB15640.1"/>
    <property type="molecule type" value="Genomic_DNA"/>
</dbReference>
<dbReference type="PIR" id="A70067">
    <property type="entry name" value="A70067"/>
</dbReference>
<dbReference type="RefSeq" id="WP_003243223.1">
    <property type="nucleotide sequence ID" value="NZ_OZ025638.1"/>
</dbReference>
<dbReference type="SMR" id="P96718"/>
<dbReference type="FunCoup" id="P96718">
    <property type="interactions" value="554"/>
</dbReference>
<dbReference type="STRING" id="224308.BSU36230"/>
<dbReference type="PaxDb" id="224308-BSU36230"/>
<dbReference type="EnsemblBacteria" id="CAB15640">
    <property type="protein sequence ID" value="CAB15640"/>
    <property type="gene ID" value="BSU_36230"/>
</dbReference>
<dbReference type="GeneID" id="936890"/>
<dbReference type="KEGG" id="bsu:BSU36230"/>
<dbReference type="PATRIC" id="fig|224308.179.peg.3921"/>
<dbReference type="eggNOG" id="COG1004">
    <property type="taxonomic scope" value="Bacteria"/>
</dbReference>
<dbReference type="InParanoid" id="P96718"/>
<dbReference type="OrthoDB" id="9803238at2"/>
<dbReference type="PhylomeDB" id="P96718"/>
<dbReference type="BioCyc" id="BSUB:BSU36230-MONOMER"/>
<dbReference type="UniPathway" id="UPA00038">
    <property type="reaction ID" value="UER00491"/>
</dbReference>
<dbReference type="Proteomes" id="UP000001570">
    <property type="component" value="Chromosome"/>
</dbReference>
<dbReference type="GO" id="GO:0005737">
    <property type="term" value="C:cytoplasm"/>
    <property type="evidence" value="ECO:0007669"/>
    <property type="project" value="UniProtKB-SubCell"/>
</dbReference>
<dbReference type="GO" id="GO:0051287">
    <property type="term" value="F:NAD binding"/>
    <property type="evidence" value="ECO:0000250"/>
    <property type="project" value="UniProtKB"/>
</dbReference>
<dbReference type="GO" id="GO:0003979">
    <property type="term" value="F:UDP-glucose 6-dehydrogenase activity"/>
    <property type="evidence" value="ECO:0000250"/>
    <property type="project" value="UniProtKB"/>
</dbReference>
<dbReference type="GO" id="GO:0071555">
    <property type="term" value="P:cell wall organization"/>
    <property type="evidence" value="ECO:0007669"/>
    <property type="project" value="UniProtKB-KW"/>
</dbReference>
<dbReference type="GO" id="GO:0000271">
    <property type="term" value="P:polysaccharide biosynthetic process"/>
    <property type="evidence" value="ECO:0007669"/>
    <property type="project" value="InterPro"/>
</dbReference>
<dbReference type="GO" id="GO:0006065">
    <property type="term" value="P:UDP-glucuronate biosynthetic process"/>
    <property type="evidence" value="ECO:0007669"/>
    <property type="project" value="UniProtKB-UniPathway"/>
</dbReference>
<dbReference type="FunFam" id="1.20.5.100:FF:000001">
    <property type="entry name" value="UDP-glucose 6-dehydrogenase"/>
    <property type="match status" value="1"/>
</dbReference>
<dbReference type="Gene3D" id="1.20.5.100">
    <property type="entry name" value="Cytochrome c1, transmembrane anchor, C-terminal"/>
    <property type="match status" value="1"/>
</dbReference>
<dbReference type="Gene3D" id="3.40.50.720">
    <property type="entry name" value="NAD(P)-binding Rossmann-like Domain"/>
    <property type="match status" value="2"/>
</dbReference>
<dbReference type="InterPro" id="IPR008927">
    <property type="entry name" value="6-PGluconate_DH-like_C_sf"/>
</dbReference>
<dbReference type="InterPro" id="IPR036291">
    <property type="entry name" value="NAD(P)-bd_dom_sf"/>
</dbReference>
<dbReference type="InterPro" id="IPR017476">
    <property type="entry name" value="UDP-Glc/GDP-Man"/>
</dbReference>
<dbReference type="InterPro" id="IPR014027">
    <property type="entry name" value="UDP-Glc/GDP-Man_DH_C"/>
</dbReference>
<dbReference type="InterPro" id="IPR036220">
    <property type="entry name" value="UDP-Glc/GDP-Man_DH_C_sf"/>
</dbReference>
<dbReference type="InterPro" id="IPR014026">
    <property type="entry name" value="UDP-Glc/GDP-Man_DH_dimer"/>
</dbReference>
<dbReference type="InterPro" id="IPR001732">
    <property type="entry name" value="UDP-Glc/GDP-Man_DH_N"/>
</dbReference>
<dbReference type="InterPro" id="IPR028357">
    <property type="entry name" value="UDPglc_DH_bac"/>
</dbReference>
<dbReference type="NCBIfam" id="TIGR03026">
    <property type="entry name" value="NDP-sugDHase"/>
    <property type="match status" value="1"/>
</dbReference>
<dbReference type="PANTHER" id="PTHR43750">
    <property type="entry name" value="UDP-GLUCOSE 6-DEHYDROGENASE TUAD"/>
    <property type="match status" value="1"/>
</dbReference>
<dbReference type="PANTHER" id="PTHR43750:SF4">
    <property type="entry name" value="UDP-GLUCOSE 6-DEHYDROGENASE YWQF"/>
    <property type="match status" value="1"/>
</dbReference>
<dbReference type="Pfam" id="PF00984">
    <property type="entry name" value="UDPG_MGDP_dh"/>
    <property type="match status" value="1"/>
</dbReference>
<dbReference type="Pfam" id="PF03720">
    <property type="entry name" value="UDPG_MGDP_dh_C"/>
    <property type="match status" value="1"/>
</dbReference>
<dbReference type="Pfam" id="PF03721">
    <property type="entry name" value="UDPG_MGDP_dh_N"/>
    <property type="match status" value="1"/>
</dbReference>
<dbReference type="PIRSF" id="PIRSF500134">
    <property type="entry name" value="UDPglc_DH_bac"/>
    <property type="match status" value="1"/>
</dbReference>
<dbReference type="PIRSF" id="PIRSF000124">
    <property type="entry name" value="UDPglc_GDPman_dh"/>
    <property type="match status" value="1"/>
</dbReference>
<dbReference type="SMART" id="SM00984">
    <property type="entry name" value="UDPG_MGDP_dh_C"/>
    <property type="match status" value="1"/>
</dbReference>
<dbReference type="SUPFAM" id="SSF48179">
    <property type="entry name" value="6-phosphogluconate dehydrogenase C-terminal domain-like"/>
    <property type="match status" value="1"/>
</dbReference>
<dbReference type="SUPFAM" id="SSF51735">
    <property type="entry name" value="NAD(P)-binding Rossmann-fold domains"/>
    <property type="match status" value="1"/>
</dbReference>
<dbReference type="SUPFAM" id="SSF52413">
    <property type="entry name" value="UDP-glucose/GDP-mannose dehydrogenase C-terminal domain"/>
    <property type="match status" value="1"/>
</dbReference>
<accession>P96718</accession>
<accession>Q795B4</accession>
<proteinExistence type="evidence at protein level"/>